<proteinExistence type="inferred from homology"/>
<comment type="function">
    <text evidence="1">Catalyzes the reversible conversion of 2-phosphoglycerate (2-PG) into phosphoenolpyruvate (PEP). It is essential for the degradation of carbohydrates via glycolysis.</text>
</comment>
<comment type="catalytic activity">
    <reaction evidence="1">
        <text>(2R)-2-phosphoglycerate = phosphoenolpyruvate + H2O</text>
        <dbReference type="Rhea" id="RHEA:10164"/>
        <dbReference type="ChEBI" id="CHEBI:15377"/>
        <dbReference type="ChEBI" id="CHEBI:58289"/>
        <dbReference type="ChEBI" id="CHEBI:58702"/>
        <dbReference type="EC" id="4.2.1.11"/>
    </reaction>
</comment>
<comment type="cofactor">
    <cofactor evidence="1">
        <name>Mg(2+)</name>
        <dbReference type="ChEBI" id="CHEBI:18420"/>
    </cofactor>
    <text evidence="1">Binds a second Mg(2+) ion via substrate during catalysis.</text>
</comment>
<comment type="pathway">
    <text evidence="1">Carbohydrate degradation; glycolysis; pyruvate from D-glyceraldehyde 3-phosphate: step 4/5.</text>
</comment>
<comment type="subcellular location">
    <subcellularLocation>
        <location evidence="1">Cytoplasm</location>
    </subcellularLocation>
    <subcellularLocation>
        <location evidence="1">Secreted</location>
    </subcellularLocation>
    <subcellularLocation>
        <location evidence="1">Cell surface</location>
    </subcellularLocation>
    <text evidence="1">Fractions of enolase are present in both the cytoplasm and on the cell surface.</text>
</comment>
<comment type="similarity">
    <text evidence="1">Belongs to the enolase family.</text>
</comment>
<dbReference type="EC" id="4.2.1.11" evidence="1"/>
<dbReference type="EMBL" id="AE016877">
    <property type="protein sequence ID" value="AAP12004.1"/>
    <property type="molecule type" value="Genomic_DNA"/>
</dbReference>
<dbReference type="RefSeq" id="NP_834803.1">
    <property type="nucleotide sequence ID" value="NC_004722.1"/>
</dbReference>
<dbReference type="RefSeq" id="WP_000103955.1">
    <property type="nucleotide sequence ID" value="NZ_CP138336.1"/>
</dbReference>
<dbReference type="SMR" id="Q815K8"/>
<dbReference type="STRING" id="226900.BC_5135"/>
<dbReference type="MetOSite" id="Q815K8"/>
<dbReference type="KEGG" id="bce:BC5135"/>
<dbReference type="PATRIC" id="fig|226900.8.peg.5293"/>
<dbReference type="HOGENOM" id="CLU_031223_2_1_9"/>
<dbReference type="OrthoDB" id="9804716at2"/>
<dbReference type="UniPathway" id="UPA00109">
    <property type="reaction ID" value="UER00187"/>
</dbReference>
<dbReference type="Proteomes" id="UP000001417">
    <property type="component" value="Chromosome"/>
</dbReference>
<dbReference type="GO" id="GO:0009986">
    <property type="term" value="C:cell surface"/>
    <property type="evidence" value="ECO:0007669"/>
    <property type="project" value="UniProtKB-SubCell"/>
</dbReference>
<dbReference type="GO" id="GO:0005576">
    <property type="term" value="C:extracellular region"/>
    <property type="evidence" value="ECO:0007669"/>
    <property type="project" value="UniProtKB-SubCell"/>
</dbReference>
<dbReference type="GO" id="GO:0000015">
    <property type="term" value="C:phosphopyruvate hydratase complex"/>
    <property type="evidence" value="ECO:0000318"/>
    <property type="project" value="GO_Central"/>
</dbReference>
<dbReference type="GO" id="GO:0000287">
    <property type="term" value="F:magnesium ion binding"/>
    <property type="evidence" value="ECO:0007669"/>
    <property type="project" value="UniProtKB-UniRule"/>
</dbReference>
<dbReference type="GO" id="GO:0004634">
    <property type="term" value="F:phosphopyruvate hydratase activity"/>
    <property type="evidence" value="ECO:0000318"/>
    <property type="project" value="GO_Central"/>
</dbReference>
<dbReference type="GO" id="GO:0006096">
    <property type="term" value="P:glycolytic process"/>
    <property type="evidence" value="ECO:0000318"/>
    <property type="project" value="GO_Central"/>
</dbReference>
<dbReference type="CDD" id="cd03313">
    <property type="entry name" value="enolase"/>
    <property type="match status" value="1"/>
</dbReference>
<dbReference type="FunFam" id="3.20.20.120:FF:000001">
    <property type="entry name" value="Enolase"/>
    <property type="match status" value="1"/>
</dbReference>
<dbReference type="FunFam" id="3.30.390.10:FF:000001">
    <property type="entry name" value="Enolase"/>
    <property type="match status" value="1"/>
</dbReference>
<dbReference type="Gene3D" id="3.20.20.120">
    <property type="entry name" value="Enolase-like C-terminal domain"/>
    <property type="match status" value="1"/>
</dbReference>
<dbReference type="Gene3D" id="3.30.390.10">
    <property type="entry name" value="Enolase-like, N-terminal domain"/>
    <property type="match status" value="1"/>
</dbReference>
<dbReference type="HAMAP" id="MF_00318">
    <property type="entry name" value="Enolase"/>
    <property type="match status" value="1"/>
</dbReference>
<dbReference type="InterPro" id="IPR000941">
    <property type="entry name" value="Enolase"/>
</dbReference>
<dbReference type="InterPro" id="IPR036849">
    <property type="entry name" value="Enolase-like_C_sf"/>
</dbReference>
<dbReference type="InterPro" id="IPR029017">
    <property type="entry name" value="Enolase-like_N"/>
</dbReference>
<dbReference type="InterPro" id="IPR020810">
    <property type="entry name" value="Enolase_C"/>
</dbReference>
<dbReference type="InterPro" id="IPR020809">
    <property type="entry name" value="Enolase_CS"/>
</dbReference>
<dbReference type="InterPro" id="IPR020811">
    <property type="entry name" value="Enolase_N"/>
</dbReference>
<dbReference type="NCBIfam" id="TIGR01060">
    <property type="entry name" value="eno"/>
    <property type="match status" value="1"/>
</dbReference>
<dbReference type="PANTHER" id="PTHR11902">
    <property type="entry name" value="ENOLASE"/>
    <property type="match status" value="1"/>
</dbReference>
<dbReference type="PANTHER" id="PTHR11902:SF1">
    <property type="entry name" value="ENOLASE"/>
    <property type="match status" value="1"/>
</dbReference>
<dbReference type="Pfam" id="PF00113">
    <property type="entry name" value="Enolase_C"/>
    <property type="match status" value="1"/>
</dbReference>
<dbReference type="Pfam" id="PF03952">
    <property type="entry name" value="Enolase_N"/>
    <property type="match status" value="1"/>
</dbReference>
<dbReference type="PIRSF" id="PIRSF001400">
    <property type="entry name" value="Enolase"/>
    <property type="match status" value="1"/>
</dbReference>
<dbReference type="PRINTS" id="PR00148">
    <property type="entry name" value="ENOLASE"/>
</dbReference>
<dbReference type="SFLD" id="SFLDF00002">
    <property type="entry name" value="enolase"/>
    <property type="match status" value="1"/>
</dbReference>
<dbReference type="SFLD" id="SFLDG00178">
    <property type="entry name" value="enolase"/>
    <property type="match status" value="1"/>
</dbReference>
<dbReference type="SMART" id="SM01192">
    <property type="entry name" value="Enolase_C"/>
    <property type="match status" value="1"/>
</dbReference>
<dbReference type="SMART" id="SM01193">
    <property type="entry name" value="Enolase_N"/>
    <property type="match status" value="1"/>
</dbReference>
<dbReference type="SUPFAM" id="SSF51604">
    <property type="entry name" value="Enolase C-terminal domain-like"/>
    <property type="match status" value="1"/>
</dbReference>
<dbReference type="SUPFAM" id="SSF54826">
    <property type="entry name" value="Enolase N-terminal domain-like"/>
    <property type="match status" value="1"/>
</dbReference>
<dbReference type="PROSITE" id="PS00164">
    <property type="entry name" value="ENOLASE"/>
    <property type="match status" value="1"/>
</dbReference>
<gene>
    <name evidence="1" type="primary">eno</name>
    <name type="ordered locus">BC_5135</name>
</gene>
<reference key="1">
    <citation type="journal article" date="2003" name="Nature">
        <title>Genome sequence of Bacillus cereus and comparative analysis with Bacillus anthracis.</title>
        <authorList>
            <person name="Ivanova N."/>
            <person name="Sorokin A."/>
            <person name="Anderson I."/>
            <person name="Galleron N."/>
            <person name="Candelon B."/>
            <person name="Kapatral V."/>
            <person name="Bhattacharyya A."/>
            <person name="Reznik G."/>
            <person name="Mikhailova N."/>
            <person name="Lapidus A."/>
            <person name="Chu L."/>
            <person name="Mazur M."/>
            <person name="Goltsman E."/>
            <person name="Larsen N."/>
            <person name="D'Souza M."/>
            <person name="Walunas T."/>
            <person name="Grechkin Y."/>
            <person name="Pusch G."/>
            <person name="Haselkorn R."/>
            <person name="Fonstein M."/>
            <person name="Ehrlich S.D."/>
            <person name="Overbeek R."/>
            <person name="Kyrpides N.C."/>
        </authorList>
    </citation>
    <scope>NUCLEOTIDE SEQUENCE [LARGE SCALE GENOMIC DNA]</scope>
    <source>
        <strain>ATCC 14579 / DSM 31 / CCUG 7414 / JCM 2152 / NBRC 15305 / NCIMB 9373 / NCTC 2599 / NRRL B-3711</strain>
    </source>
</reference>
<organism>
    <name type="scientific">Bacillus cereus (strain ATCC 14579 / DSM 31 / CCUG 7414 / JCM 2152 / NBRC 15305 / NCIMB 9373 / NCTC 2599 / NRRL B-3711)</name>
    <dbReference type="NCBI Taxonomy" id="226900"/>
    <lineage>
        <taxon>Bacteria</taxon>
        <taxon>Bacillati</taxon>
        <taxon>Bacillota</taxon>
        <taxon>Bacilli</taxon>
        <taxon>Bacillales</taxon>
        <taxon>Bacillaceae</taxon>
        <taxon>Bacillus</taxon>
        <taxon>Bacillus cereus group</taxon>
    </lineage>
</organism>
<name>ENO_BACCR</name>
<sequence>MSTIIDVYAREVLDSRGNPTVEVEVYTESGAFGRAIVPSGASTGEHEAVELRDGDKSRYLGKGVVNAVNNVNEIIAPEIAGFDVTDQAGIDRAMIELDGTPNKGKLGANAILGVSMAVAHAAADFVGLPLYRYLGGFNAKQLPTPMMNIINGGSHADNNVDFQEFMILPVGAPTFKESIRMGAEVFHALKAVLHDKGLNTAVGDEGGFAPNLGSNREALEVIIEAIEKAGYKAGENVFLGMDVASSEFYNKETGKYDLAGEGRTGLTSAEMVDFYEELCKDFPIISIEDGLDENDWDGHKLLTERIGDKVQLVGDDLFVTNTQKLAEGIEKGISNSILIKVNQIGTLTETFEAIEMAKRAGYTAVVSHRSGETEDATIADIAVATNAGQIKTGSMSRTDRIAKYNQLLRIEDELGEVAVYDGVKSFYNIKR</sequence>
<feature type="chain" id="PRO_0000133835" description="Enolase">
    <location>
        <begin position="1"/>
        <end position="431"/>
    </location>
</feature>
<feature type="active site" description="Proton donor" evidence="1">
    <location>
        <position position="205"/>
    </location>
</feature>
<feature type="active site" description="Proton acceptor" evidence="1">
    <location>
        <position position="340"/>
    </location>
</feature>
<feature type="binding site" evidence="1">
    <location>
        <position position="163"/>
    </location>
    <ligand>
        <name>(2R)-2-phosphoglycerate</name>
        <dbReference type="ChEBI" id="CHEBI:58289"/>
    </ligand>
</feature>
<feature type="binding site" evidence="1">
    <location>
        <position position="242"/>
    </location>
    <ligand>
        <name>Mg(2+)</name>
        <dbReference type="ChEBI" id="CHEBI:18420"/>
    </ligand>
</feature>
<feature type="binding site" evidence="1">
    <location>
        <position position="288"/>
    </location>
    <ligand>
        <name>Mg(2+)</name>
        <dbReference type="ChEBI" id="CHEBI:18420"/>
    </ligand>
</feature>
<feature type="binding site" evidence="1">
    <location>
        <position position="315"/>
    </location>
    <ligand>
        <name>Mg(2+)</name>
        <dbReference type="ChEBI" id="CHEBI:18420"/>
    </ligand>
</feature>
<feature type="binding site" evidence="1">
    <location>
        <position position="340"/>
    </location>
    <ligand>
        <name>(2R)-2-phosphoglycerate</name>
        <dbReference type="ChEBI" id="CHEBI:58289"/>
    </ligand>
</feature>
<feature type="binding site" evidence="1">
    <location>
        <position position="369"/>
    </location>
    <ligand>
        <name>(2R)-2-phosphoglycerate</name>
        <dbReference type="ChEBI" id="CHEBI:58289"/>
    </ligand>
</feature>
<feature type="binding site" evidence="1">
    <location>
        <position position="370"/>
    </location>
    <ligand>
        <name>(2R)-2-phosphoglycerate</name>
        <dbReference type="ChEBI" id="CHEBI:58289"/>
    </ligand>
</feature>
<feature type="binding site" evidence="1">
    <location>
        <position position="391"/>
    </location>
    <ligand>
        <name>(2R)-2-phosphoglycerate</name>
        <dbReference type="ChEBI" id="CHEBI:58289"/>
    </ligand>
</feature>
<accession>Q815K8</accession>
<keyword id="KW-0963">Cytoplasm</keyword>
<keyword id="KW-0324">Glycolysis</keyword>
<keyword id="KW-0456">Lyase</keyword>
<keyword id="KW-0460">Magnesium</keyword>
<keyword id="KW-0479">Metal-binding</keyword>
<keyword id="KW-1185">Reference proteome</keyword>
<keyword id="KW-0964">Secreted</keyword>
<evidence type="ECO:0000255" key="1">
    <source>
        <dbReference type="HAMAP-Rule" id="MF_00318"/>
    </source>
</evidence>
<protein>
    <recommendedName>
        <fullName evidence="1">Enolase</fullName>
        <ecNumber evidence="1">4.2.1.11</ecNumber>
    </recommendedName>
    <alternativeName>
        <fullName evidence="1">2-phospho-D-glycerate hydro-lyase</fullName>
    </alternativeName>
    <alternativeName>
        <fullName evidence="1">2-phosphoglycerate dehydratase</fullName>
    </alternativeName>
</protein>